<organism>
    <name type="scientific">Shewanella sediminis (strain HAW-EB3)</name>
    <dbReference type="NCBI Taxonomy" id="425104"/>
    <lineage>
        <taxon>Bacteria</taxon>
        <taxon>Pseudomonadati</taxon>
        <taxon>Pseudomonadota</taxon>
        <taxon>Gammaproteobacteria</taxon>
        <taxon>Alteromonadales</taxon>
        <taxon>Shewanellaceae</taxon>
        <taxon>Shewanella</taxon>
    </lineage>
</organism>
<evidence type="ECO:0000255" key="1">
    <source>
        <dbReference type="HAMAP-Rule" id="MF_00471"/>
    </source>
</evidence>
<comment type="function">
    <text evidence="1">Globally modulates RNA abundance by binding to RNase E (Rne) and regulating its endonucleolytic activity. Can modulate Rne action in a substrate-dependent manner by altering the composition of the degradosome. Modulates RNA-binding and helicase activities of the degradosome.</text>
</comment>
<comment type="subunit">
    <text evidence="1">Homotrimer. Binds to both RNA-binding sites in the C-terminal region of Rne and to RhlB.</text>
</comment>
<comment type="subcellular location">
    <subcellularLocation>
        <location evidence="1">Cytoplasm</location>
    </subcellularLocation>
</comment>
<comment type="similarity">
    <text evidence="1">Belongs to the RraA family.</text>
</comment>
<dbReference type="EMBL" id="CP000821">
    <property type="protein sequence ID" value="ABV38698.1"/>
    <property type="molecule type" value="Genomic_DNA"/>
</dbReference>
<dbReference type="RefSeq" id="WP_012144428.1">
    <property type="nucleotide sequence ID" value="NC_009831.1"/>
</dbReference>
<dbReference type="SMR" id="A8G0S5"/>
<dbReference type="STRING" id="425104.Ssed_4094"/>
<dbReference type="KEGG" id="sse:Ssed_4094"/>
<dbReference type="eggNOG" id="COG0684">
    <property type="taxonomic scope" value="Bacteria"/>
</dbReference>
<dbReference type="HOGENOM" id="CLU_072626_4_0_6"/>
<dbReference type="OrthoDB" id="943692at2"/>
<dbReference type="Proteomes" id="UP000002015">
    <property type="component" value="Chromosome"/>
</dbReference>
<dbReference type="GO" id="GO:0005737">
    <property type="term" value="C:cytoplasm"/>
    <property type="evidence" value="ECO:0007669"/>
    <property type="project" value="UniProtKB-SubCell"/>
</dbReference>
<dbReference type="GO" id="GO:0060698">
    <property type="term" value="F:endoribonuclease inhibitor activity"/>
    <property type="evidence" value="ECO:0007669"/>
    <property type="project" value="UniProtKB-UniRule"/>
</dbReference>
<dbReference type="GO" id="GO:0019899">
    <property type="term" value="F:enzyme binding"/>
    <property type="evidence" value="ECO:0007669"/>
    <property type="project" value="UniProtKB-UniRule"/>
</dbReference>
<dbReference type="GO" id="GO:0051252">
    <property type="term" value="P:regulation of RNA metabolic process"/>
    <property type="evidence" value="ECO:0007669"/>
    <property type="project" value="InterPro"/>
</dbReference>
<dbReference type="CDD" id="cd16841">
    <property type="entry name" value="RraA_family"/>
    <property type="match status" value="1"/>
</dbReference>
<dbReference type="Gene3D" id="3.50.30.40">
    <property type="entry name" value="Ribonuclease E inhibitor RraA/RraA-like"/>
    <property type="match status" value="1"/>
</dbReference>
<dbReference type="HAMAP" id="MF_00471">
    <property type="entry name" value="RraA"/>
    <property type="match status" value="1"/>
</dbReference>
<dbReference type="InterPro" id="IPR010203">
    <property type="entry name" value="RraA"/>
</dbReference>
<dbReference type="InterPro" id="IPR005493">
    <property type="entry name" value="RraA/RraA-like"/>
</dbReference>
<dbReference type="InterPro" id="IPR036704">
    <property type="entry name" value="RraA/RraA-like_sf"/>
</dbReference>
<dbReference type="InterPro" id="IPR014339">
    <property type="entry name" value="RraA_gpbac"/>
</dbReference>
<dbReference type="NCBIfam" id="TIGR01935">
    <property type="entry name" value="NOT-MenG"/>
    <property type="match status" value="1"/>
</dbReference>
<dbReference type="NCBIfam" id="NF006875">
    <property type="entry name" value="PRK09372.1"/>
    <property type="match status" value="1"/>
</dbReference>
<dbReference type="NCBIfam" id="TIGR02998">
    <property type="entry name" value="RraA_entero"/>
    <property type="match status" value="1"/>
</dbReference>
<dbReference type="PANTHER" id="PTHR33254">
    <property type="entry name" value="4-HYDROXY-4-METHYL-2-OXOGLUTARATE ALDOLASE 3-RELATED"/>
    <property type="match status" value="1"/>
</dbReference>
<dbReference type="PANTHER" id="PTHR33254:SF29">
    <property type="entry name" value="REGULATOR OF RIBONUCLEASE ACTIVITY A"/>
    <property type="match status" value="1"/>
</dbReference>
<dbReference type="Pfam" id="PF03737">
    <property type="entry name" value="RraA-like"/>
    <property type="match status" value="1"/>
</dbReference>
<dbReference type="SUPFAM" id="SSF89562">
    <property type="entry name" value="RraA-like"/>
    <property type="match status" value="1"/>
</dbReference>
<gene>
    <name evidence="1" type="primary">rraA</name>
    <name type="ordered locus">Ssed_4094</name>
</gene>
<accession>A8G0S5</accession>
<sequence length="161" mass="17145">MEYNTSELCDTYIDVVDVVEPMFSNYGGCNSFGGSISTIKCFEDNGLIAEALQQDGEGKVLLVDGGGSLRRALLDASIAQLAVDNKWEGIIIYGSVRDVDALEDLDIGIQALASIPVGADENSVGELEIPVNFGGVTFLPLDHVYADNTGIILSPEPLDME</sequence>
<feature type="chain" id="PRO_1000081212" description="Regulator of ribonuclease activity A">
    <location>
        <begin position="1"/>
        <end position="161"/>
    </location>
</feature>
<name>RRAA_SHESH</name>
<reference key="1">
    <citation type="submission" date="2007-08" db="EMBL/GenBank/DDBJ databases">
        <title>Complete sequence of Shewanella sediminis HAW-EB3.</title>
        <authorList>
            <consortium name="US DOE Joint Genome Institute"/>
            <person name="Copeland A."/>
            <person name="Lucas S."/>
            <person name="Lapidus A."/>
            <person name="Barry K."/>
            <person name="Glavina del Rio T."/>
            <person name="Dalin E."/>
            <person name="Tice H."/>
            <person name="Pitluck S."/>
            <person name="Chertkov O."/>
            <person name="Brettin T."/>
            <person name="Bruce D."/>
            <person name="Detter J.C."/>
            <person name="Han C."/>
            <person name="Schmutz J."/>
            <person name="Larimer F."/>
            <person name="Land M."/>
            <person name="Hauser L."/>
            <person name="Kyrpides N."/>
            <person name="Kim E."/>
            <person name="Zhao J.-S."/>
            <person name="Richardson P."/>
        </authorList>
    </citation>
    <scope>NUCLEOTIDE SEQUENCE [LARGE SCALE GENOMIC DNA]</scope>
    <source>
        <strain>HAW-EB3</strain>
    </source>
</reference>
<proteinExistence type="inferred from homology"/>
<keyword id="KW-0963">Cytoplasm</keyword>
<keyword id="KW-1185">Reference proteome</keyword>
<protein>
    <recommendedName>
        <fullName evidence="1">Regulator of ribonuclease activity A</fullName>
    </recommendedName>
</protein>